<accession>Q9CL24</accession>
<protein>
    <recommendedName>
        <fullName>Probable oxaloacetate decarboxylase beta chain</fullName>
        <ecNumber>7.2.4.2</ecNumber>
    </recommendedName>
</protein>
<name>OADB_PASMU</name>
<proteinExistence type="inferred from homology"/>
<comment type="function">
    <text evidence="1">Catalyzes the decarboxylation of oxaloacetate coupled to Na(+) translocation.</text>
</comment>
<comment type="catalytic activity">
    <reaction>
        <text>oxaloacetate + 2 Na(+)(in) + H(+) = pyruvate + 2 Na(+)(out) + CO2</text>
        <dbReference type="Rhea" id="RHEA:57724"/>
        <dbReference type="ChEBI" id="CHEBI:15361"/>
        <dbReference type="ChEBI" id="CHEBI:15378"/>
        <dbReference type="ChEBI" id="CHEBI:16452"/>
        <dbReference type="ChEBI" id="CHEBI:16526"/>
        <dbReference type="ChEBI" id="CHEBI:29101"/>
        <dbReference type="EC" id="7.2.4.2"/>
    </reaction>
</comment>
<comment type="cofactor">
    <cofactor evidence="1">
        <name>Na(+)</name>
        <dbReference type="ChEBI" id="CHEBI:29101"/>
    </cofactor>
</comment>
<comment type="subunit">
    <text evidence="1">Heterotrimer of an alpha, a beta and a gamma subunit.</text>
</comment>
<comment type="subcellular location">
    <subcellularLocation>
        <location evidence="1">Cell membrane</location>
        <topology evidence="1">Multi-pass membrane protein</topology>
    </subcellularLocation>
</comment>
<comment type="similarity">
    <text evidence="3">Belongs to the GcdB/MmdB/OadB family.</text>
</comment>
<evidence type="ECO:0000250" key="1"/>
<evidence type="ECO:0000255" key="2"/>
<evidence type="ECO:0000305" key="3"/>
<sequence length="434" mass="45358">MESILSLLRGMGIMHLELGQALMMLISLVLLWLAIARKFEPLLLLPIGFGGLLSNIPEAGLAMSALESLLHQGSAEQIAIIAAKLNTVADPVAIKEALANAVPSVQNQLEVMAGDMGYNAGVLALFYKVAIGYGVAPLIIFMGVGAMTDFGPLLANPRTLLLGAAAQFGIFATIIGALLLNWTGIISFTLPQAAAIGIIGGADGPTAIYLSSKLAPELLGAIAVAAYSYMALVPLIQPPIMRALTTQAERKIKMVQLRNVSNREKILFPIVLVTLVALLLPDAAPLLGMFCFGNLLRTSGVVERLNDTAQNALINIVTIFLGLAVGSKLVADKFLQPQTLGILLLGVVAFCIGTASGVIMAKFMNKICKHPINPLIGAAGVSAVPMAARVANKVGLEEDHQNFLLMHAMGPNVAGVIGSAIAAGVMLKYVSALM</sequence>
<dbReference type="EC" id="7.2.4.2"/>
<dbReference type="EMBL" id="AE004439">
    <property type="protein sequence ID" value="AAK03507.1"/>
    <property type="molecule type" value="Genomic_DNA"/>
</dbReference>
<dbReference type="RefSeq" id="WP_005754979.1">
    <property type="nucleotide sequence ID" value="NC_002663.1"/>
</dbReference>
<dbReference type="SMR" id="Q9CL24"/>
<dbReference type="STRING" id="272843.PM1423"/>
<dbReference type="EnsemblBacteria" id="AAK03507">
    <property type="protein sequence ID" value="AAK03507"/>
    <property type="gene ID" value="PM1423"/>
</dbReference>
<dbReference type="KEGG" id="pmu:PM1423"/>
<dbReference type="HOGENOM" id="CLU_036168_0_0_6"/>
<dbReference type="OrthoDB" id="9783838at2"/>
<dbReference type="Proteomes" id="UP000000809">
    <property type="component" value="Chromosome"/>
</dbReference>
<dbReference type="GO" id="GO:0005886">
    <property type="term" value="C:plasma membrane"/>
    <property type="evidence" value="ECO:0007669"/>
    <property type="project" value="UniProtKB-SubCell"/>
</dbReference>
<dbReference type="GO" id="GO:0015451">
    <property type="term" value="F:decarboxylation-driven active transmembrane transporter activity"/>
    <property type="evidence" value="ECO:0007669"/>
    <property type="project" value="UniProtKB-EC"/>
</dbReference>
<dbReference type="GO" id="GO:0016829">
    <property type="term" value="F:lyase activity"/>
    <property type="evidence" value="ECO:0007669"/>
    <property type="project" value="InterPro"/>
</dbReference>
<dbReference type="GO" id="GO:0006814">
    <property type="term" value="P:sodium ion transport"/>
    <property type="evidence" value="ECO:0007669"/>
    <property type="project" value="UniProtKB-KW"/>
</dbReference>
<dbReference type="InterPro" id="IPR005661">
    <property type="entry name" value="OadB_MmdB"/>
</dbReference>
<dbReference type="NCBIfam" id="TIGR01109">
    <property type="entry name" value="Na_pump_decarbB"/>
    <property type="match status" value="1"/>
</dbReference>
<dbReference type="PANTHER" id="PTHR35806">
    <property type="entry name" value="OXALOACETATE DECARBOXYLASE BETA CHAIN 2"/>
    <property type="match status" value="1"/>
</dbReference>
<dbReference type="PANTHER" id="PTHR35806:SF1">
    <property type="entry name" value="OXALOACETATE DECARBOXYLASE BETA CHAIN 2"/>
    <property type="match status" value="1"/>
</dbReference>
<dbReference type="Pfam" id="PF03977">
    <property type="entry name" value="OAD_beta"/>
    <property type="match status" value="1"/>
</dbReference>
<dbReference type="PIRSF" id="PIRSF015658">
    <property type="entry name" value="MmdB_OadB"/>
    <property type="match status" value="1"/>
</dbReference>
<reference key="1">
    <citation type="journal article" date="2001" name="Proc. Natl. Acad. Sci. U.S.A.">
        <title>Complete genomic sequence of Pasteurella multocida Pm70.</title>
        <authorList>
            <person name="May B.J."/>
            <person name="Zhang Q."/>
            <person name="Li L.L."/>
            <person name="Paustian M.L."/>
            <person name="Whittam T.S."/>
            <person name="Kapur V."/>
        </authorList>
    </citation>
    <scope>NUCLEOTIDE SEQUENCE [LARGE SCALE GENOMIC DNA]</scope>
    <source>
        <strain>Pm70</strain>
    </source>
</reference>
<feature type="chain" id="PRO_0000218564" description="Probable oxaloacetate decarboxylase beta chain">
    <location>
        <begin position="1"/>
        <end position="434"/>
    </location>
</feature>
<feature type="transmembrane region" description="Helical" evidence="2">
    <location>
        <begin position="13"/>
        <end position="35"/>
    </location>
</feature>
<feature type="transmembrane region" description="Helical" evidence="2">
    <location>
        <begin position="122"/>
        <end position="144"/>
    </location>
</feature>
<feature type="transmembrane region" description="Helical" evidence="2">
    <location>
        <begin position="159"/>
        <end position="181"/>
    </location>
</feature>
<feature type="transmembrane region" description="Helical" evidence="2">
    <location>
        <begin position="186"/>
        <end position="208"/>
    </location>
</feature>
<feature type="transmembrane region" description="Helical" evidence="2">
    <location>
        <begin position="223"/>
        <end position="245"/>
    </location>
</feature>
<feature type="transmembrane region" description="Helical" evidence="2">
    <location>
        <begin position="266"/>
        <end position="288"/>
    </location>
</feature>
<feature type="transmembrane region" description="Helical" evidence="2">
    <location>
        <begin position="308"/>
        <end position="327"/>
    </location>
</feature>
<feature type="transmembrane region" description="Helical" evidence="2">
    <location>
        <begin position="339"/>
        <end position="361"/>
    </location>
</feature>
<feature type="transmembrane region" description="Helical" evidence="2">
    <location>
        <begin position="403"/>
        <end position="425"/>
    </location>
</feature>
<keyword id="KW-1003">Cell membrane</keyword>
<keyword id="KW-0406">Ion transport</keyword>
<keyword id="KW-0472">Membrane</keyword>
<keyword id="KW-1185">Reference proteome</keyword>
<keyword id="KW-0915">Sodium</keyword>
<keyword id="KW-0739">Sodium transport</keyword>
<keyword id="KW-1278">Translocase</keyword>
<keyword id="KW-0812">Transmembrane</keyword>
<keyword id="KW-1133">Transmembrane helix</keyword>
<keyword id="KW-0813">Transport</keyword>
<organism>
    <name type="scientific">Pasteurella multocida (strain Pm70)</name>
    <dbReference type="NCBI Taxonomy" id="272843"/>
    <lineage>
        <taxon>Bacteria</taxon>
        <taxon>Pseudomonadati</taxon>
        <taxon>Pseudomonadota</taxon>
        <taxon>Gammaproteobacteria</taxon>
        <taxon>Pasteurellales</taxon>
        <taxon>Pasteurellaceae</taxon>
        <taxon>Pasteurella</taxon>
    </lineage>
</organism>
<gene>
    <name type="primary">oadB</name>
    <name type="ordered locus">PM1423</name>
</gene>